<reference key="1">
    <citation type="journal article" date="2002" name="Nat. Genet.">
        <title>Genome sequence of the endocellular obligate symbiont of tsetse flies, Wigglesworthia glossinidia.</title>
        <authorList>
            <person name="Akman L."/>
            <person name="Yamashita A."/>
            <person name="Watanabe H."/>
            <person name="Oshima K."/>
            <person name="Shiba T."/>
            <person name="Hattori M."/>
            <person name="Aksoy S."/>
        </authorList>
    </citation>
    <scope>NUCLEOTIDE SEQUENCE [LARGE SCALE GENOMIC DNA]</scope>
</reference>
<accession>Q8D1Z4</accession>
<keyword id="KW-1185">Reference proteome</keyword>
<keyword id="KW-0687">Ribonucleoprotein</keyword>
<keyword id="KW-0689">Ribosomal protein</keyword>
<dbReference type="EMBL" id="BA000021">
    <property type="protein sequence ID" value="BAC24707.1"/>
    <property type="molecule type" value="Genomic_DNA"/>
</dbReference>
<dbReference type="SMR" id="Q8D1Z4"/>
<dbReference type="STRING" id="36870.gene:10369070"/>
<dbReference type="KEGG" id="wbr:rpmD"/>
<dbReference type="eggNOG" id="COG1841">
    <property type="taxonomic scope" value="Bacteria"/>
</dbReference>
<dbReference type="HOGENOM" id="CLU_131047_1_4_6"/>
<dbReference type="OrthoDB" id="9812790at2"/>
<dbReference type="Proteomes" id="UP000000562">
    <property type="component" value="Chromosome"/>
</dbReference>
<dbReference type="GO" id="GO:0022625">
    <property type="term" value="C:cytosolic large ribosomal subunit"/>
    <property type="evidence" value="ECO:0007669"/>
    <property type="project" value="TreeGrafter"/>
</dbReference>
<dbReference type="GO" id="GO:0003735">
    <property type="term" value="F:structural constituent of ribosome"/>
    <property type="evidence" value="ECO:0007669"/>
    <property type="project" value="InterPro"/>
</dbReference>
<dbReference type="GO" id="GO:0006412">
    <property type="term" value="P:translation"/>
    <property type="evidence" value="ECO:0007669"/>
    <property type="project" value="UniProtKB-UniRule"/>
</dbReference>
<dbReference type="CDD" id="cd01658">
    <property type="entry name" value="Ribosomal_L30"/>
    <property type="match status" value="1"/>
</dbReference>
<dbReference type="FunFam" id="3.30.1390.20:FF:000001">
    <property type="entry name" value="50S ribosomal protein L30"/>
    <property type="match status" value="1"/>
</dbReference>
<dbReference type="Gene3D" id="3.30.1390.20">
    <property type="entry name" value="Ribosomal protein L30, ferredoxin-like fold domain"/>
    <property type="match status" value="1"/>
</dbReference>
<dbReference type="HAMAP" id="MF_01371_B">
    <property type="entry name" value="Ribosomal_uL30_B"/>
    <property type="match status" value="1"/>
</dbReference>
<dbReference type="InterPro" id="IPR036919">
    <property type="entry name" value="Ribo_uL30_ferredoxin-like_sf"/>
</dbReference>
<dbReference type="InterPro" id="IPR005996">
    <property type="entry name" value="Ribosomal_uL30_bac-type"/>
</dbReference>
<dbReference type="InterPro" id="IPR018038">
    <property type="entry name" value="Ribosomal_uL30_CS"/>
</dbReference>
<dbReference type="InterPro" id="IPR016082">
    <property type="entry name" value="Ribosomal_uL30_ferredoxin-like"/>
</dbReference>
<dbReference type="NCBIfam" id="TIGR01308">
    <property type="entry name" value="rpmD_bact"/>
    <property type="match status" value="1"/>
</dbReference>
<dbReference type="PANTHER" id="PTHR15892:SF2">
    <property type="entry name" value="LARGE RIBOSOMAL SUBUNIT PROTEIN UL30M"/>
    <property type="match status" value="1"/>
</dbReference>
<dbReference type="PANTHER" id="PTHR15892">
    <property type="entry name" value="MITOCHONDRIAL RIBOSOMAL PROTEIN L30"/>
    <property type="match status" value="1"/>
</dbReference>
<dbReference type="Pfam" id="PF00327">
    <property type="entry name" value="Ribosomal_L30"/>
    <property type="match status" value="1"/>
</dbReference>
<dbReference type="PIRSF" id="PIRSF002211">
    <property type="entry name" value="Ribosomal_L30_bac-type"/>
    <property type="match status" value="1"/>
</dbReference>
<dbReference type="SUPFAM" id="SSF55129">
    <property type="entry name" value="Ribosomal protein L30p/L7e"/>
    <property type="match status" value="1"/>
</dbReference>
<dbReference type="PROSITE" id="PS00634">
    <property type="entry name" value="RIBOSOMAL_L30"/>
    <property type="match status" value="1"/>
</dbReference>
<gene>
    <name evidence="1" type="primary">rpmD</name>
    <name type="ordered locus">WIGBR5610</name>
</gene>
<protein>
    <recommendedName>
        <fullName evidence="1">Large ribosomal subunit protein uL30</fullName>
    </recommendedName>
    <alternativeName>
        <fullName evidence="2">50S ribosomal protein L30</fullName>
    </alternativeName>
</protein>
<organism>
    <name type="scientific">Wigglesworthia glossinidia brevipalpis</name>
    <dbReference type="NCBI Taxonomy" id="36870"/>
    <lineage>
        <taxon>Bacteria</taxon>
        <taxon>Pseudomonadati</taxon>
        <taxon>Pseudomonadota</taxon>
        <taxon>Gammaproteobacteria</taxon>
        <taxon>Enterobacterales</taxon>
        <taxon>Erwiniaceae</taxon>
        <taxon>Wigglesworthia</taxon>
    </lineage>
</organism>
<name>RL30_WIGBR</name>
<sequence>MNKLKITQIKSSIGCLKKHKSTLYGLGLRHIGHTVIRQNSPRLLGMINSISYLVKIKD</sequence>
<proteinExistence type="inferred from homology"/>
<comment type="subunit">
    <text evidence="1">Part of the 50S ribosomal subunit.</text>
</comment>
<comment type="similarity">
    <text evidence="1">Belongs to the universal ribosomal protein uL30 family.</text>
</comment>
<feature type="chain" id="PRO_0000273889" description="Large ribosomal subunit protein uL30">
    <location>
        <begin position="1"/>
        <end position="58"/>
    </location>
</feature>
<evidence type="ECO:0000255" key="1">
    <source>
        <dbReference type="HAMAP-Rule" id="MF_01371"/>
    </source>
</evidence>
<evidence type="ECO:0000305" key="2"/>